<gene>
    <name type="primary">ptp</name>
</gene>
<sequence>MQFKNILVVCIGNICRSPMAEYLLKQNYPQLTIHSAGISGMIGYSADEKAQLCMERIGIDMSPHIAKKLNAELLKQADLILVMSQNQQKHIEQTWPFAKGKTFRLGHWQGKNIPDPYQHDQAFFDETSLLIQTCVADWTKHI</sequence>
<feature type="chain" id="PRO_0000046566" description="Low molecular weight protein-tyrosine-phosphatase Ptp">
    <location>
        <begin position="1"/>
        <end position="142"/>
    </location>
</feature>
<feature type="active site" description="Nucleophile" evidence="1">
    <location>
        <position position="10"/>
    </location>
</feature>
<feature type="active site" evidence="1">
    <location>
        <position position="16"/>
    </location>
</feature>
<feature type="active site" description="Proton donor" evidence="1">
    <location>
        <position position="115"/>
    </location>
</feature>
<feature type="mutagenesis site" description="Loss of activity." evidence="2">
    <original>C</original>
    <variation>S</variation>
    <location>
        <position position="10"/>
    </location>
</feature>
<feature type="mutagenesis site" description="Loss of activity." evidence="2">
    <original>R</original>
    <variation>K</variation>
    <location>
        <position position="16"/>
    </location>
</feature>
<name>PTP_ACIJO</name>
<evidence type="ECO:0000250" key="1">
    <source>
        <dbReference type="UniProtKB" id="P11064"/>
    </source>
</evidence>
<evidence type="ECO:0000269" key="2">
    <source>
    </source>
</evidence>
<evidence type="ECO:0000305" key="3"/>
<comment type="function">
    <text>Dephosphorylates ptk. May be involved in the production and the transport of exopolysaccharides.</text>
</comment>
<comment type="catalytic activity">
    <reaction>
        <text>O-phospho-L-tyrosyl-[protein] + H2O = L-tyrosyl-[protein] + phosphate</text>
        <dbReference type="Rhea" id="RHEA:10684"/>
        <dbReference type="Rhea" id="RHEA-COMP:10136"/>
        <dbReference type="Rhea" id="RHEA-COMP:20101"/>
        <dbReference type="ChEBI" id="CHEBI:15377"/>
        <dbReference type="ChEBI" id="CHEBI:43474"/>
        <dbReference type="ChEBI" id="CHEBI:46858"/>
        <dbReference type="ChEBI" id="CHEBI:61978"/>
        <dbReference type="EC" id="3.1.3.48"/>
    </reaction>
</comment>
<comment type="activity regulation">
    <text>Inhibited by ammonium molybdate, sodium orthovanadate, N-ethylmaleimide and iodoacetic acid.</text>
</comment>
<comment type="pathway">
    <text>Glycan metabolism; exopolysaccharide biosynthesis.</text>
</comment>
<comment type="similarity">
    <text evidence="3">Belongs to the low molecular weight phosphotyrosine protein phosphatase family.</text>
</comment>
<organism>
    <name type="scientific">Acinetobacter johnsonii</name>
    <dbReference type="NCBI Taxonomy" id="40214"/>
    <lineage>
        <taxon>Bacteria</taxon>
        <taxon>Pseudomonadati</taxon>
        <taxon>Pseudomonadota</taxon>
        <taxon>Gammaproteobacteria</taxon>
        <taxon>Moraxellales</taxon>
        <taxon>Moraxellaceae</taxon>
        <taxon>Acinetobacter</taxon>
    </lineage>
</organism>
<accession>O52787</accession>
<protein>
    <recommendedName>
        <fullName>Low molecular weight protein-tyrosine-phosphatase Ptp</fullName>
        <ecNumber>3.1.3.48</ecNumber>
    </recommendedName>
</protein>
<dbReference type="EC" id="3.1.3.48"/>
<dbReference type="EMBL" id="Y15162">
    <property type="protein sequence ID" value="CAA75430.1"/>
    <property type="molecule type" value="Genomic_DNA"/>
</dbReference>
<dbReference type="RefSeq" id="WP_339401326.1">
    <property type="nucleotide sequence ID" value="NZ_JBBGZJ010000011.1"/>
</dbReference>
<dbReference type="SMR" id="O52787"/>
<dbReference type="UniPathway" id="UPA00631"/>
<dbReference type="GO" id="GO:0004725">
    <property type="term" value="F:protein tyrosine phosphatase activity"/>
    <property type="evidence" value="ECO:0007669"/>
    <property type="project" value="UniProtKB-EC"/>
</dbReference>
<dbReference type="GO" id="GO:0000271">
    <property type="term" value="P:polysaccharide biosynthetic process"/>
    <property type="evidence" value="ECO:0007669"/>
    <property type="project" value="UniProtKB-KW"/>
</dbReference>
<dbReference type="CDD" id="cd16343">
    <property type="entry name" value="LMWPTP"/>
    <property type="match status" value="1"/>
</dbReference>
<dbReference type="Gene3D" id="3.40.50.2300">
    <property type="match status" value="1"/>
</dbReference>
<dbReference type="InterPro" id="IPR050438">
    <property type="entry name" value="LMW_PTPase"/>
</dbReference>
<dbReference type="InterPro" id="IPR023485">
    <property type="entry name" value="Ptyr_pPase"/>
</dbReference>
<dbReference type="InterPro" id="IPR036196">
    <property type="entry name" value="Ptyr_pPase_sf"/>
</dbReference>
<dbReference type="InterPro" id="IPR017867">
    <property type="entry name" value="Tyr_phospatase_low_mol_wt"/>
</dbReference>
<dbReference type="PANTHER" id="PTHR11717">
    <property type="entry name" value="LOW MOLECULAR WEIGHT PROTEIN TYROSINE PHOSPHATASE"/>
    <property type="match status" value="1"/>
</dbReference>
<dbReference type="PANTHER" id="PTHR11717:SF31">
    <property type="entry name" value="LOW MOLECULAR WEIGHT PROTEIN-TYROSINE-PHOSPHATASE ETP-RELATED"/>
    <property type="match status" value="1"/>
</dbReference>
<dbReference type="Pfam" id="PF01451">
    <property type="entry name" value="LMWPc"/>
    <property type="match status" value="1"/>
</dbReference>
<dbReference type="PRINTS" id="PR00719">
    <property type="entry name" value="LMWPTPASE"/>
</dbReference>
<dbReference type="SMART" id="SM00226">
    <property type="entry name" value="LMWPc"/>
    <property type="match status" value="1"/>
</dbReference>
<dbReference type="SUPFAM" id="SSF52788">
    <property type="entry name" value="Phosphotyrosine protein phosphatases I"/>
    <property type="match status" value="1"/>
</dbReference>
<reference key="1">
    <citation type="journal article" date="1997" name="Gene">
        <title>Characterization of a bacterial gene encoding an autophosphorylating protein tyrosine kinase.</title>
        <authorList>
            <person name="Grangeasse C."/>
            <person name="Doublet P."/>
            <person name="Vaganay E."/>
            <person name="Vincent C."/>
            <person name="Deleage G."/>
            <person name="Duclos B."/>
            <person name="Cozzone A.J."/>
        </authorList>
    </citation>
    <scope>NUCLEOTIDE SEQUENCE [GENOMIC DNA]</scope>
</reference>
<reference key="2">
    <citation type="journal article" date="1998" name="J. Mol. Biol.">
        <title>Functional characterization of the low-molecular-mass phosphotyrosine-protein phosphatase of Acinetobacter johnsonii.</title>
        <authorList>
            <person name="Grangeasse C."/>
            <person name="Doublet P."/>
            <person name="Vincent C."/>
            <person name="Vaganay E."/>
            <person name="Riberty M."/>
            <person name="Duclos B."/>
            <person name="Cozzone A.J."/>
        </authorList>
    </citation>
    <scope>CHARACTERIZATION</scope>
    <scope>MUTAGENESIS OF CYS-10 AND ARG-16</scope>
</reference>
<proteinExistence type="evidence at protein level"/>
<keyword id="KW-0270">Exopolysaccharide synthesis</keyword>
<keyword id="KW-0378">Hydrolase</keyword>
<keyword id="KW-0904">Protein phosphatase</keyword>